<dbReference type="EMBL" id="CP000241">
    <property type="protein sequence ID" value="ABF84226.1"/>
    <property type="molecule type" value="Genomic_DNA"/>
</dbReference>
<dbReference type="RefSeq" id="WP_000532088.1">
    <property type="nucleotide sequence ID" value="NC_008086.1"/>
</dbReference>
<dbReference type="SMR" id="Q1CUZ6"/>
<dbReference type="KEGG" id="hpa:HPAG1_0159"/>
<dbReference type="HOGENOM" id="CLU_062974_2_2_7"/>
<dbReference type="GO" id="GO:0005829">
    <property type="term" value="C:cytosol"/>
    <property type="evidence" value="ECO:0007669"/>
    <property type="project" value="TreeGrafter"/>
</dbReference>
<dbReference type="GO" id="GO:0003677">
    <property type="term" value="F:DNA binding"/>
    <property type="evidence" value="ECO:0007669"/>
    <property type="project" value="UniProtKB-UniRule"/>
</dbReference>
<dbReference type="GO" id="GO:0006355">
    <property type="term" value="P:regulation of DNA-templated transcription"/>
    <property type="evidence" value="ECO:0007669"/>
    <property type="project" value="UniProtKB-UniRule"/>
</dbReference>
<dbReference type="FunFam" id="1.10.10.200:FF:000008">
    <property type="entry name" value="Probable transcriptional regulatory protein HP_0162"/>
    <property type="match status" value="1"/>
</dbReference>
<dbReference type="Gene3D" id="1.10.10.200">
    <property type="match status" value="1"/>
</dbReference>
<dbReference type="Gene3D" id="3.30.70.980">
    <property type="match status" value="2"/>
</dbReference>
<dbReference type="HAMAP" id="MF_00693">
    <property type="entry name" value="Transcrip_reg_TACO1"/>
    <property type="match status" value="1"/>
</dbReference>
<dbReference type="InterPro" id="IPR017856">
    <property type="entry name" value="Integrase-like_N"/>
</dbReference>
<dbReference type="InterPro" id="IPR048300">
    <property type="entry name" value="TACO1_YebC-like_2nd/3rd_dom"/>
</dbReference>
<dbReference type="InterPro" id="IPR049083">
    <property type="entry name" value="TACO1_YebC_N"/>
</dbReference>
<dbReference type="InterPro" id="IPR002876">
    <property type="entry name" value="Transcrip_reg_TACO1-like"/>
</dbReference>
<dbReference type="InterPro" id="IPR026564">
    <property type="entry name" value="Transcrip_reg_TACO1-like_dom3"/>
</dbReference>
<dbReference type="InterPro" id="IPR029072">
    <property type="entry name" value="YebC-like"/>
</dbReference>
<dbReference type="NCBIfam" id="NF009044">
    <property type="entry name" value="PRK12378.1"/>
    <property type="match status" value="1"/>
</dbReference>
<dbReference type="NCBIfam" id="TIGR01033">
    <property type="entry name" value="YebC/PmpR family DNA-binding transcriptional regulator"/>
    <property type="match status" value="1"/>
</dbReference>
<dbReference type="PANTHER" id="PTHR12532:SF6">
    <property type="entry name" value="TRANSCRIPTIONAL REGULATORY PROTEIN YEBC-RELATED"/>
    <property type="match status" value="1"/>
</dbReference>
<dbReference type="PANTHER" id="PTHR12532">
    <property type="entry name" value="TRANSLATIONAL ACTIVATOR OF CYTOCHROME C OXIDASE 1"/>
    <property type="match status" value="1"/>
</dbReference>
<dbReference type="Pfam" id="PF20772">
    <property type="entry name" value="TACO1_YebC_N"/>
    <property type="match status" value="1"/>
</dbReference>
<dbReference type="Pfam" id="PF01709">
    <property type="entry name" value="Transcrip_reg"/>
    <property type="match status" value="1"/>
</dbReference>
<dbReference type="SUPFAM" id="SSF75625">
    <property type="entry name" value="YebC-like"/>
    <property type="match status" value="1"/>
</dbReference>
<evidence type="ECO:0000255" key="1">
    <source>
        <dbReference type="HAMAP-Rule" id="MF_00693"/>
    </source>
</evidence>
<proteinExistence type="inferred from homology"/>
<organism>
    <name type="scientific">Helicobacter pylori (strain HPAG1)</name>
    <dbReference type="NCBI Taxonomy" id="357544"/>
    <lineage>
        <taxon>Bacteria</taxon>
        <taxon>Pseudomonadati</taxon>
        <taxon>Campylobacterota</taxon>
        <taxon>Epsilonproteobacteria</taxon>
        <taxon>Campylobacterales</taxon>
        <taxon>Helicobacteraceae</taxon>
        <taxon>Helicobacter</taxon>
    </lineage>
</organism>
<keyword id="KW-0963">Cytoplasm</keyword>
<keyword id="KW-0238">DNA-binding</keyword>
<keyword id="KW-0804">Transcription</keyword>
<keyword id="KW-0805">Transcription regulation</keyword>
<sequence>MGRAFEYRRAAKEKRWDKMSKVFPKLAKAITLAAKDGGSEPDTNAKLRTAILNAKAQNMPKDNIDAAIKRASSKEGNLSEITYEGKANFGVLIIMECMTDNPTRTIANLKSYFNKTQGASIVPNGSLEFMFNRKSVFECLKNEVENLKLSLEDLEFALIDYGLEELEEVGDKIIIRGDYNSFKLLNEGFESLKLPILKAGLQRIATTPIELNDEQMELTEKLLDRIEDDDDVVALYTNIE</sequence>
<gene>
    <name type="ordered locus">HPAG1_0159</name>
</gene>
<feature type="chain" id="PRO_0000257072" description="Probable transcriptional regulatory protein HPAG1_0159">
    <location>
        <begin position="1"/>
        <end position="240"/>
    </location>
</feature>
<name>Y159_HELPH</name>
<comment type="subcellular location">
    <subcellularLocation>
        <location evidence="1">Cytoplasm</location>
    </subcellularLocation>
</comment>
<comment type="similarity">
    <text evidence="1">Belongs to the TACO1 family.</text>
</comment>
<accession>Q1CUZ6</accession>
<protein>
    <recommendedName>
        <fullName evidence="1">Probable transcriptional regulatory protein HPAG1_0159</fullName>
    </recommendedName>
</protein>
<reference key="1">
    <citation type="journal article" date="2006" name="Proc. Natl. Acad. Sci. U.S.A.">
        <title>The complete genome sequence of a chronic atrophic gastritis Helicobacter pylori strain: evolution during disease progression.</title>
        <authorList>
            <person name="Oh J.D."/>
            <person name="Kling-Baeckhed H."/>
            <person name="Giannakis M."/>
            <person name="Xu J."/>
            <person name="Fulton R.S."/>
            <person name="Fulton L.A."/>
            <person name="Cordum H.S."/>
            <person name="Wang C."/>
            <person name="Elliott G."/>
            <person name="Edwards J."/>
            <person name="Mardis E.R."/>
            <person name="Engstrand L.G."/>
            <person name="Gordon J.I."/>
        </authorList>
    </citation>
    <scope>NUCLEOTIDE SEQUENCE [LARGE SCALE GENOMIC DNA]</scope>
    <source>
        <strain>HPAG1</strain>
    </source>
</reference>